<feature type="chain" id="PRO_1000067713" description="ATP synthase subunit alpha">
    <location>
        <begin position="1"/>
        <end position="513"/>
    </location>
</feature>
<feature type="binding site" evidence="1">
    <location>
        <begin position="169"/>
        <end position="176"/>
    </location>
    <ligand>
        <name>ATP</name>
        <dbReference type="ChEBI" id="CHEBI:30616"/>
    </ligand>
</feature>
<feature type="site" description="Required for activity" evidence="1">
    <location>
        <position position="373"/>
    </location>
</feature>
<keyword id="KW-0066">ATP synthesis</keyword>
<keyword id="KW-0067">ATP-binding</keyword>
<keyword id="KW-0997">Cell inner membrane</keyword>
<keyword id="KW-1003">Cell membrane</keyword>
<keyword id="KW-0139">CF(1)</keyword>
<keyword id="KW-0375">Hydrogen ion transport</keyword>
<keyword id="KW-0406">Ion transport</keyword>
<keyword id="KW-0472">Membrane</keyword>
<keyword id="KW-0547">Nucleotide-binding</keyword>
<keyword id="KW-1278">Translocase</keyword>
<keyword id="KW-0813">Transport</keyword>
<protein>
    <recommendedName>
        <fullName evidence="1">ATP synthase subunit alpha</fullName>
        <ecNumber evidence="1">7.1.2.2</ecNumber>
    </recommendedName>
    <alternativeName>
        <fullName evidence="1">ATP synthase F1 sector subunit alpha</fullName>
    </alternativeName>
    <alternativeName>
        <fullName evidence="1">F-ATPase subunit alpha</fullName>
    </alternativeName>
</protein>
<organism>
    <name type="scientific">Enterobacter sp. (strain 638)</name>
    <dbReference type="NCBI Taxonomy" id="399742"/>
    <lineage>
        <taxon>Bacteria</taxon>
        <taxon>Pseudomonadati</taxon>
        <taxon>Pseudomonadota</taxon>
        <taxon>Gammaproteobacteria</taxon>
        <taxon>Enterobacterales</taxon>
        <taxon>Enterobacteriaceae</taxon>
        <taxon>Enterobacter</taxon>
    </lineage>
</organism>
<dbReference type="EC" id="7.1.2.2" evidence="1"/>
<dbReference type="EMBL" id="CP000653">
    <property type="protein sequence ID" value="ABP62783.1"/>
    <property type="molecule type" value="Genomic_DNA"/>
</dbReference>
<dbReference type="RefSeq" id="WP_015961086.1">
    <property type="nucleotide sequence ID" value="NC_009436.1"/>
</dbReference>
<dbReference type="SMR" id="A4WGF3"/>
<dbReference type="STRING" id="399742.Ent638_4130"/>
<dbReference type="GeneID" id="93307134"/>
<dbReference type="KEGG" id="ent:Ent638_4130"/>
<dbReference type="eggNOG" id="COG0056">
    <property type="taxonomic scope" value="Bacteria"/>
</dbReference>
<dbReference type="HOGENOM" id="CLU_010091_2_1_6"/>
<dbReference type="OrthoDB" id="9803053at2"/>
<dbReference type="Proteomes" id="UP000000230">
    <property type="component" value="Chromosome"/>
</dbReference>
<dbReference type="GO" id="GO:0005886">
    <property type="term" value="C:plasma membrane"/>
    <property type="evidence" value="ECO:0007669"/>
    <property type="project" value="UniProtKB-SubCell"/>
</dbReference>
<dbReference type="GO" id="GO:0045259">
    <property type="term" value="C:proton-transporting ATP synthase complex"/>
    <property type="evidence" value="ECO:0007669"/>
    <property type="project" value="UniProtKB-KW"/>
</dbReference>
<dbReference type="GO" id="GO:0043531">
    <property type="term" value="F:ADP binding"/>
    <property type="evidence" value="ECO:0007669"/>
    <property type="project" value="TreeGrafter"/>
</dbReference>
<dbReference type="GO" id="GO:0005524">
    <property type="term" value="F:ATP binding"/>
    <property type="evidence" value="ECO:0007669"/>
    <property type="project" value="UniProtKB-UniRule"/>
</dbReference>
<dbReference type="GO" id="GO:0046933">
    <property type="term" value="F:proton-transporting ATP synthase activity, rotational mechanism"/>
    <property type="evidence" value="ECO:0007669"/>
    <property type="project" value="UniProtKB-UniRule"/>
</dbReference>
<dbReference type="CDD" id="cd18113">
    <property type="entry name" value="ATP-synt_F1_alpha_C"/>
    <property type="match status" value="1"/>
</dbReference>
<dbReference type="CDD" id="cd18116">
    <property type="entry name" value="ATP-synt_F1_alpha_N"/>
    <property type="match status" value="1"/>
</dbReference>
<dbReference type="CDD" id="cd01132">
    <property type="entry name" value="F1-ATPase_alpha_CD"/>
    <property type="match status" value="1"/>
</dbReference>
<dbReference type="FunFam" id="1.20.150.20:FF:000001">
    <property type="entry name" value="ATP synthase subunit alpha"/>
    <property type="match status" value="1"/>
</dbReference>
<dbReference type="FunFam" id="2.40.30.20:FF:000001">
    <property type="entry name" value="ATP synthase subunit alpha"/>
    <property type="match status" value="1"/>
</dbReference>
<dbReference type="FunFam" id="3.40.50.300:FF:000002">
    <property type="entry name" value="ATP synthase subunit alpha"/>
    <property type="match status" value="1"/>
</dbReference>
<dbReference type="Gene3D" id="2.40.30.20">
    <property type="match status" value="1"/>
</dbReference>
<dbReference type="Gene3D" id="1.20.150.20">
    <property type="entry name" value="ATP synthase alpha/beta chain, C-terminal domain"/>
    <property type="match status" value="1"/>
</dbReference>
<dbReference type="Gene3D" id="3.40.50.300">
    <property type="entry name" value="P-loop containing nucleotide triphosphate hydrolases"/>
    <property type="match status" value="1"/>
</dbReference>
<dbReference type="HAMAP" id="MF_01346">
    <property type="entry name" value="ATP_synth_alpha_bact"/>
    <property type="match status" value="1"/>
</dbReference>
<dbReference type="InterPro" id="IPR023366">
    <property type="entry name" value="ATP_synth_asu-like_sf"/>
</dbReference>
<dbReference type="InterPro" id="IPR000793">
    <property type="entry name" value="ATP_synth_asu_C"/>
</dbReference>
<dbReference type="InterPro" id="IPR038376">
    <property type="entry name" value="ATP_synth_asu_C_sf"/>
</dbReference>
<dbReference type="InterPro" id="IPR033732">
    <property type="entry name" value="ATP_synth_F1_a_nt-bd_dom"/>
</dbReference>
<dbReference type="InterPro" id="IPR005294">
    <property type="entry name" value="ATP_synth_F1_asu"/>
</dbReference>
<dbReference type="InterPro" id="IPR020003">
    <property type="entry name" value="ATPase_a/bsu_AS"/>
</dbReference>
<dbReference type="InterPro" id="IPR004100">
    <property type="entry name" value="ATPase_F1/V1/A1_a/bsu_N"/>
</dbReference>
<dbReference type="InterPro" id="IPR036121">
    <property type="entry name" value="ATPase_F1/V1/A1_a/bsu_N_sf"/>
</dbReference>
<dbReference type="InterPro" id="IPR000194">
    <property type="entry name" value="ATPase_F1/V1/A1_a/bsu_nucl-bd"/>
</dbReference>
<dbReference type="InterPro" id="IPR027417">
    <property type="entry name" value="P-loop_NTPase"/>
</dbReference>
<dbReference type="NCBIfam" id="TIGR00962">
    <property type="entry name" value="atpA"/>
    <property type="match status" value="1"/>
</dbReference>
<dbReference type="NCBIfam" id="NF009884">
    <property type="entry name" value="PRK13343.1"/>
    <property type="match status" value="1"/>
</dbReference>
<dbReference type="PANTHER" id="PTHR48082">
    <property type="entry name" value="ATP SYNTHASE SUBUNIT ALPHA, MITOCHONDRIAL"/>
    <property type="match status" value="1"/>
</dbReference>
<dbReference type="PANTHER" id="PTHR48082:SF2">
    <property type="entry name" value="ATP SYNTHASE SUBUNIT ALPHA, MITOCHONDRIAL"/>
    <property type="match status" value="1"/>
</dbReference>
<dbReference type="Pfam" id="PF00006">
    <property type="entry name" value="ATP-synt_ab"/>
    <property type="match status" value="1"/>
</dbReference>
<dbReference type="Pfam" id="PF00306">
    <property type="entry name" value="ATP-synt_ab_C"/>
    <property type="match status" value="1"/>
</dbReference>
<dbReference type="Pfam" id="PF02874">
    <property type="entry name" value="ATP-synt_ab_N"/>
    <property type="match status" value="1"/>
</dbReference>
<dbReference type="SUPFAM" id="SSF47917">
    <property type="entry name" value="C-terminal domain of alpha and beta subunits of F1 ATP synthase"/>
    <property type="match status" value="1"/>
</dbReference>
<dbReference type="SUPFAM" id="SSF50615">
    <property type="entry name" value="N-terminal domain of alpha and beta subunits of F1 ATP synthase"/>
    <property type="match status" value="1"/>
</dbReference>
<dbReference type="SUPFAM" id="SSF52540">
    <property type="entry name" value="P-loop containing nucleoside triphosphate hydrolases"/>
    <property type="match status" value="1"/>
</dbReference>
<dbReference type="PROSITE" id="PS00152">
    <property type="entry name" value="ATPASE_ALPHA_BETA"/>
    <property type="match status" value="1"/>
</dbReference>
<name>ATPA_ENT38</name>
<proteinExistence type="inferred from homology"/>
<evidence type="ECO:0000255" key="1">
    <source>
        <dbReference type="HAMAP-Rule" id="MF_01346"/>
    </source>
</evidence>
<comment type="function">
    <text evidence="1">Produces ATP from ADP in the presence of a proton gradient across the membrane. The alpha chain is a regulatory subunit.</text>
</comment>
<comment type="catalytic activity">
    <reaction evidence="1">
        <text>ATP + H2O + 4 H(+)(in) = ADP + phosphate + 5 H(+)(out)</text>
        <dbReference type="Rhea" id="RHEA:57720"/>
        <dbReference type="ChEBI" id="CHEBI:15377"/>
        <dbReference type="ChEBI" id="CHEBI:15378"/>
        <dbReference type="ChEBI" id="CHEBI:30616"/>
        <dbReference type="ChEBI" id="CHEBI:43474"/>
        <dbReference type="ChEBI" id="CHEBI:456216"/>
        <dbReference type="EC" id="7.1.2.2"/>
    </reaction>
</comment>
<comment type="subunit">
    <text evidence="1">F-type ATPases have 2 components, CF(1) - the catalytic core - and CF(0) - the membrane proton channel. CF(1) has five subunits: alpha(3), beta(3), gamma(1), delta(1), epsilon(1). CF(0) has three main subunits: a(1), b(2) and c(9-12). The alpha and beta chains form an alternating ring which encloses part of the gamma chain. CF(1) is attached to CF(0) by a central stalk formed by the gamma and epsilon chains, while a peripheral stalk is formed by the delta and b chains.</text>
</comment>
<comment type="subcellular location">
    <subcellularLocation>
        <location evidence="1">Cell inner membrane</location>
        <topology evidence="1">Peripheral membrane protein</topology>
    </subcellularLocation>
</comment>
<comment type="similarity">
    <text evidence="1">Belongs to the ATPase alpha/beta chains family.</text>
</comment>
<sequence>MQLNSTEISELIKQRIAQFSVVSEAHNEGTIVSVSDGVIRIHGLADCMQGEMISLPGNRYAIALNLERDSVGAVVMGPYADLAEGMKVKCTGRILEVPVGRGLLGRVVNTLGAPIDGKGPVDNDGFSPIEVIAPGVIERQSVDQPVQTGYKSVDAMIPIGRGQRELIIGDRQTGKTAMAIDAIINQRDSGIKCVYVAIGQKASTISNVVRKLEEHGALSNTIVVVATASESAALQYLAPYAGCAMGEYFRDRGEDALIVYDDLSKQAVAYRQVSLLLRRPPGREAFPGDVFYLHSRLLERASRVNAEYVENFTKGEVKGKTGSLTALPIIETQAGDVSAFVPTNVISITDGQIFLETNLFNSGIRPAVNPGISVSRVGGAAQTKIIKKLSGGIRTALAQYRELAAFSQFASDLDEATRKQLSHGQKVTELLKQKQYAPMSVAQQGLVLFAAERGYLEDVELAKIGSFEAALLAYVDRDHAPLMQEINQSGGYNDEIEGKLKSILDSFKATQSW</sequence>
<gene>
    <name evidence="1" type="primary">atpA</name>
    <name type="ordered locus">Ent638_4130</name>
</gene>
<reference key="1">
    <citation type="journal article" date="2010" name="PLoS Genet.">
        <title>Genome sequence of the plant growth promoting endophytic bacterium Enterobacter sp. 638.</title>
        <authorList>
            <person name="Taghavi S."/>
            <person name="van der Lelie D."/>
            <person name="Hoffman A."/>
            <person name="Zhang Y.B."/>
            <person name="Walla M.D."/>
            <person name="Vangronsveld J."/>
            <person name="Newman L."/>
            <person name="Monchy S."/>
        </authorList>
    </citation>
    <scope>NUCLEOTIDE SEQUENCE [LARGE SCALE GENOMIC DNA]</scope>
    <source>
        <strain>638</strain>
    </source>
</reference>
<accession>A4WGF3</accession>